<name>ADD_MYCA9</name>
<protein>
    <recommendedName>
        <fullName evidence="1">Adenosine deaminase</fullName>
        <ecNumber evidence="1">3.5.4.4</ecNumber>
    </recommendedName>
    <alternativeName>
        <fullName evidence="1">Adenosine aminohydrolase</fullName>
    </alternativeName>
</protein>
<accession>B1MFZ9</accession>
<comment type="function">
    <text evidence="1">Catalyzes the hydrolytic deamination of adenosine and 2-deoxyadenosine.</text>
</comment>
<comment type="catalytic activity">
    <reaction evidence="1">
        <text>adenosine + H2O + H(+) = inosine + NH4(+)</text>
        <dbReference type="Rhea" id="RHEA:24408"/>
        <dbReference type="ChEBI" id="CHEBI:15377"/>
        <dbReference type="ChEBI" id="CHEBI:15378"/>
        <dbReference type="ChEBI" id="CHEBI:16335"/>
        <dbReference type="ChEBI" id="CHEBI:17596"/>
        <dbReference type="ChEBI" id="CHEBI:28938"/>
        <dbReference type="EC" id="3.5.4.4"/>
    </reaction>
    <physiologicalReaction direction="left-to-right" evidence="1">
        <dbReference type="Rhea" id="RHEA:24409"/>
    </physiologicalReaction>
</comment>
<comment type="catalytic activity">
    <reaction evidence="1">
        <text>2'-deoxyadenosine + H2O + H(+) = 2'-deoxyinosine + NH4(+)</text>
        <dbReference type="Rhea" id="RHEA:28190"/>
        <dbReference type="ChEBI" id="CHEBI:15377"/>
        <dbReference type="ChEBI" id="CHEBI:15378"/>
        <dbReference type="ChEBI" id="CHEBI:17256"/>
        <dbReference type="ChEBI" id="CHEBI:28938"/>
        <dbReference type="ChEBI" id="CHEBI:28997"/>
        <dbReference type="EC" id="3.5.4.4"/>
    </reaction>
    <physiologicalReaction direction="left-to-right" evidence="1">
        <dbReference type="Rhea" id="RHEA:28191"/>
    </physiologicalReaction>
</comment>
<comment type="cofactor">
    <cofactor evidence="1">
        <name>Zn(2+)</name>
        <dbReference type="ChEBI" id="CHEBI:29105"/>
    </cofactor>
    <text evidence="1">Binds 1 zinc ion per subunit.</text>
</comment>
<comment type="similarity">
    <text evidence="1">Belongs to the metallo-dependent hydrolases superfamily. Adenosine and AMP deaminases family. Adenosine deaminase subfamily.</text>
</comment>
<feature type="chain" id="PRO_1000128851" description="Adenosine deaminase">
    <location>
        <begin position="1"/>
        <end position="362"/>
    </location>
</feature>
<feature type="active site" description="Proton donor" evidence="1">
    <location>
        <position position="211"/>
    </location>
</feature>
<feature type="binding site" evidence="1">
    <location>
        <position position="19"/>
    </location>
    <ligand>
        <name>Zn(2+)</name>
        <dbReference type="ChEBI" id="CHEBI:29105"/>
        <note>catalytic</note>
    </ligand>
</feature>
<feature type="binding site" evidence="1">
    <location>
        <position position="21"/>
    </location>
    <ligand>
        <name>substrate</name>
    </ligand>
</feature>
<feature type="binding site" evidence="1">
    <location>
        <position position="21"/>
    </location>
    <ligand>
        <name>Zn(2+)</name>
        <dbReference type="ChEBI" id="CHEBI:29105"/>
        <note>catalytic</note>
    </ligand>
</feature>
<feature type="binding site" evidence="1">
    <location>
        <position position="23"/>
    </location>
    <ligand>
        <name>substrate</name>
    </ligand>
</feature>
<feature type="binding site" evidence="1">
    <location>
        <position position="181"/>
    </location>
    <ligand>
        <name>substrate</name>
    </ligand>
</feature>
<feature type="binding site" evidence="1">
    <location>
        <position position="208"/>
    </location>
    <ligand>
        <name>Zn(2+)</name>
        <dbReference type="ChEBI" id="CHEBI:29105"/>
        <note>catalytic</note>
    </ligand>
</feature>
<feature type="binding site" evidence="1">
    <location>
        <position position="300"/>
    </location>
    <ligand>
        <name>Zn(2+)</name>
        <dbReference type="ChEBI" id="CHEBI:29105"/>
        <note>catalytic</note>
    </ligand>
</feature>
<feature type="site" description="Important for catalytic activity" evidence="1">
    <location>
        <position position="232"/>
    </location>
</feature>
<keyword id="KW-0378">Hydrolase</keyword>
<keyword id="KW-0479">Metal-binding</keyword>
<keyword id="KW-0546">Nucleotide metabolism</keyword>
<keyword id="KW-1185">Reference proteome</keyword>
<keyword id="KW-0862">Zinc</keyword>
<sequence>MTAELDLVSITQAPKALLHDHLDGGLRPGTVLDLARETGYENLPAQDETALASWFRTAADSGSLEQYLETFAHTVGVMQTASALHRVAAECVEDLAADGVVYAEVRFAPELHIDAGLTLDDVMDAVLAGFADGERQASAAGKRIKVRTLVTAMRHAARSREIAELAVKFRDRGAVGFDIAGAEAGYPPTRHLDAFEYMRNANSRFTIHAGEGFGLPSIHEAIAFCGADRLGHGVRIVDDIDIGPDGTAHLGRLSSLLRDKRVPLELCPSSNVQTGAVESLADHPFDLLARLRFRVTVNTDNRLMSDTTMSREMLRLVETFGYGWSDLQRFTINAMKSAFIPFDERLAIIDDVIKPGYAVLIG</sequence>
<reference key="1">
    <citation type="journal article" date="2009" name="PLoS ONE">
        <title>Non mycobacterial virulence genes in the genome of the emerging pathogen Mycobacterium abscessus.</title>
        <authorList>
            <person name="Ripoll F."/>
            <person name="Pasek S."/>
            <person name="Schenowitz C."/>
            <person name="Dossat C."/>
            <person name="Barbe V."/>
            <person name="Rottman M."/>
            <person name="Macheras E."/>
            <person name="Heym B."/>
            <person name="Herrmann J.L."/>
            <person name="Daffe M."/>
            <person name="Brosch R."/>
            <person name="Risler J.L."/>
            <person name="Gaillard J.L."/>
        </authorList>
    </citation>
    <scope>NUCLEOTIDE SEQUENCE [LARGE SCALE GENOMIC DNA]</scope>
    <source>
        <strain>ATCC 19977 / DSM 44196 / CCUG 20993 / CIP 104536 / JCM 13569 / NCTC 13031 / TMC 1543 / L948</strain>
    </source>
</reference>
<dbReference type="EC" id="3.5.4.4" evidence="1"/>
<dbReference type="EMBL" id="CU458896">
    <property type="protein sequence ID" value="CAM63744.1"/>
    <property type="molecule type" value="Genomic_DNA"/>
</dbReference>
<dbReference type="RefSeq" id="WP_005080733.1">
    <property type="nucleotide sequence ID" value="NZ_MLCG01000001.1"/>
</dbReference>
<dbReference type="SMR" id="B1MFZ9"/>
<dbReference type="GeneID" id="93380609"/>
<dbReference type="KEGG" id="mab:MAB_3670c"/>
<dbReference type="Proteomes" id="UP000007137">
    <property type="component" value="Chromosome"/>
</dbReference>
<dbReference type="GO" id="GO:0005829">
    <property type="term" value="C:cytosol"/>
    <property type="evidence" value="ECO:0007669"/>
    <property type="project" value="TreeGrafter"/>
</dbReference>
<dbReference type="GO" id="GO:0046936">
    <property type="term" value="F:2'-deoxyadenosine deaminase activity"/>
    <property type="evidence" value="ECO:0007669"/>
    <property type="project" value="RHEA"/>
</dbReference>
<dbReference type="GO" id="GO:0004000">
    <property type="term" value="F:adenosine deaminase activity"/>
    <property type="evidence" value="ECO:0007669"/>
    <property type="project" value="UniProtKB-UniRule"/>
</dbReference>
<dbReference type="GO" id="GO:0008270">
    <property type="term" value="F:zinc ion binding"/>
    <property type="evidence" value="ECO:0007669"/>
    <property type="project" value="UniProtKB-UniRule"/>
</dbReference>
<dbReference type="GO" id="GO:0006154">
    <property type="term" value="P:adenosine catabolic process"/>
    <property type="evidence" value="ECO:0007669"/>
    <property type="project" value="TreeGrafter"/>
</dbReference>
<dbReference type="GO" id="GO:0043103">
    <property type="term" value="P:hypoxanthine salvage"/>
    <property type="evidence" value="ECO:0007669"/>
    <property type="project" value="TreeGrafter"/>
</dbReference>
<dbReference type="GO" id="GO:0046103">
    <property type="term" value="P:inosine biosynthetic process"/>
    <property type="evidence" value="ECO:0007669"/>
    <property type="project" value="TreeGrafter"/>
</dbReference>
<dbReference type="GO" id="GO:0009117">
    <property type="term" value="P:nucleotide metabolic process"/>
    <property type="evidence" value="ECO:0007669"/>
    <property type="project" value="UniProtKB-KW"/>
</dbReference>
<dbReference type="GO" id="GO:0009168">
    <property type="term" value="P:purine ribonucleoside monophosphate biosynthetic process"/>
    <property type="evidence" value="ECO:0007669"/>
    <property type="project" value="UniProtKB-UniRule"/>
</dbReference>
<dbReference type="FunFam" id="3.20.20.140:FF:000020">
    <property type="entry name" value="Adenosine deaminase"/>
    <property type="match status" value="1"/>
</dbReference>
<dbReference type="Gene3D" id="3.20.20.140">
    <property type="entry name" value="Metal-dependent hydrolases"/>
    <property type="match status" value="1"/>
</dbReference>
<dbReference type="HAMAP" id="MF_00540">
    <property type="entry name" value="A_deaminase"/>
    <property type="match status" value="1"/>
</dbReference>
<dbReference type="InterPro" id="IPR028893">
    <property type="entry name" value="A_deaminase"/>
</dbReference>
<dbReference type="InterPro" id="IPR001365">
    <property type="entry name" value="A_deaminase_dom"/>
</dbReference>
<dbReference type="InterPro" id="IPR006330">
    <property type="entry name" value="Ado/ade_deaminase"/>
</dbReference>
<dbReference type="InterPro" id="IPR032466">
    <property type="entry name" value="Metal_Hydrolase"/>
</dbReference>
<dbReference type="NCBIfam" id="TIGR01430">
    <property type="entry name" value="aden_deam"/>
    <property type="match status" value="1"/>
</dbReference>
<dbReference type="NCBIfam" id="NF006847">
    <property type="entry name" value="PRK09358.1-2"/>
    <property type="match status" value="1"/>
</dbReference>
<dbReference type="PANTHER" id="PTHR11409">
    <property type="entry name" value="ADENOSINE DEAMINASE"/>
    <property type="match status" value="1"/>
</dbReference>
<dbReference type="PANTHER" id="PTHR11409:SF43">
    <property type="entry name" value="ADENOSINE DEAMINASE"/>
    <property type="match status" value="1"/>
</dbReference>
<dbReference type="Pfam" id="PF00962">
    <property type="entry name" value="A_deaminase"/>
    <property type="match status" value="1"/>
</dbReference>
<dbReference type="SUPFAM" id="SSF51556">
    <property type="entry name" value="Metallo-dependent hydrolases"/>
    <property type="match status" value="1"/>
</dbReference>
<organism>
    <name type="scientific">Mycobacteroides abscessus (strain ATCC 19977 / DSM 44196 / CCUG 20993 / CIP 104536 / JCM 13569 / NCTC 13031 / TMC 1543 / L948)</name>
    <name type="common">Mycobacterium abscessus</name>
    <dbReference type="NCBI Taxonomy" id="561007"/>
    <lineage>
        <taxon>Bacteria</taxon>
        <taxon>Bacillati</taxon>
        <taxon>Actinomycetota</taxon>
        <taxon>Actinomycetes</taxon>
        <taxon>Mycobacteriales</taxon>
        <taxon>Mycobacteriaceae</taxon>
        <taxon>Mycobacteroides</taxon>
        <taxon>Mycobacteroides abscessus</taxon>
    </lineage>
</organism>
<proteinExistence type="inferred from homology"/>
<gene>
    <name evidence="1" type="primary">add</name>
    <name type="ordered locus">MAB_3670c</name>
</gene>
<evidence type="ECO:0000255" key="1">
    <source>
        <dbReference type="HAMAP-Rule" id="MF_00540"/>
    </source>
</evidence>